<reference key="1">
    <citation type="journal article" date="2004" name="Arch. Virol.">
        <title>Pelargonium necrotic spot virus: a new member of the genus Tombusvirus.</title>
        <authorList>
            <person name="Heinze C."/>
            <person name="Wobbe V."/>
            <person name="Lesemann D.-E."/>
            <person name="Zhang D.Y."/>
            <person name="Willingmann P."/>
            <person name="Adam G."/>
        </authorList>
    </citation>
    <scope>NUCLEOTIDE SEQUENCE [GENOMIC RNA]</scope>
</reference>
<proteinExistence type="inferred from homology"/>
<organismHost>
    <name type="scientific">Pelargonium zonale</name>
    <dbReference type="NCBI Taxonomy" id="4032"/>
</organismHost>
<keyword id="KW-0945">Host-virus interaction</keyword>
<keyword id="KW-1090">Inhibition of host innate immune response by virus</keyword>
<keyword id="KW-0694">RNA-binding</keyword>
<keyword id="KW-0941">Suppressor of RNA silencing</keyword>
<keyword id="KW-0899">Viral immunoevasion</keyword>
<comment type="function">
    <text evidence="1">Viral suppressor of RNA silencing which binds specifically to silencing RNAs (siRNAs). Acts as a molecular caliper to specifically select siRNAs based on the length of the duplex region of the RNA (By similarity).</text>
</comment>
<comment type="subunit">
    <text evidence="1">Homodimer.</text>
</comment>
<comment type="similarity">
    <text evidence="3">Belongs to the tombusvirus protein p19 family.</text>
</comment>
<accession>Q709N3</accession>
<gene>
    <name type="ORF">ORF4</name>
</gene>
<protein>
    <recommendedName>
        <fullName>RNA silencing suppressor p19</fullName>
    </recommendedName>
    <alternativeName>
        <fullName>19 kDa symptom severity modulator</fullName>
    </alternativeName>
</protein>
<sequence length="172" mass="19060">MERAVQGGDAREQANSERWDGGCGGTITPFKLSDESPSLHEWRLHHSEEGEDQDHPLGFKESWSFGKVVFKRYLRYGGTETSLHRALGSWERNTVNNAASRFLGFGQIGCTYSIRFRGSCLTISGGSRTLQRLIEMAIRTKCTVLQLTPSEVEGNVSGGSPEGIEAFEKESE</sequence>
<organism>
    <name type="scientific">Pelargonium necrotic spot virus</name>
    <name type="common">PeNSV</name>
    <dbReference type="NCBI Taxonomy" id="255587"/>
    <lineage>
        <taxon>Viruses</taxon>
        <taxon>Riboviria</taxon>
        <taxon>Orthornavirae</taxon>
        <taxon>Kitrinoviricota</taxon>
        <taxon>Tolucaviricetes</taxon>
        <taxon>Tolivirales</taxon>
        <taxon>Tombusviridae</taxon>
        <taxon>Procedovirinae</taxon>
        <taxon>Tombusvirus</taxon>
        <taxon>Tombusvirus necropelargonii</taxon>
    </lineage>
</organism>
<dbReference type="EMBL" id="AJ607402">
    <property type="protein sequence ID" value="CAE55160.1"/>
    <property type="molecule type" value="Genomic_RNA"/>
</dbReference>
<dbReference type="RefSeq" id="NP_945118.1">
    <property type="nucleotide sequence ID" value="NC_005285.1"/>
</dbReference>
<dbReference type="SMR" id="Q709N3"/>
<dbReference type="KEGG" id="vg:10216565"/>
<dbReference type="OrthoDB" id="10877at10239"/>
<dbReference type="Proteomes" id="UP000202589">
    <property type="component" value="Genome"/>
</dbReference>
<dbReference type="GO" id="GO:0044423">
    <property type="term" value="C:virion component"/>
    <property type="evidence" value="ECO:0007669"/>
    <property type="project" value="InterPro"/>
</dbReference>
<dbReference type="GO" id="GO:0003723">
    <property type="term" value="F:RNA binding"/>
    <property type="evidence" value="ECO:0007669"/>
    <property type="project" value="UniProtKB-KW"/>
</dbReference>
<dbReference type="GO" id="GO:0052170">
    <property type="term" value="P:symbiont-mediated suppression of host innate immune response"/>
    <property type="evidence" value="ECO:0007669"/>
    <property type="project" value="UniProtKB-KW"/>
</dbReference>
<dbReference type="Gene3D" id="3.30.390.180">
    <property type="entry name" value="RNA silencing suppressor P19"/>
    <property type="match status" value="1"/>
</dbReference>
<dbReference type="InterPro" id="IPR004905">
    <property type="entry name" value="Tombusvirus_p19"/>
</dbReference>
<dbReference type="InterPro" id="IPR036131">
    <property type="entry name" value="VP19_sf"/>
</dbReference>
<dbReference type="Pfam" id="PF03220">
    <property type="entry name" value="Tombus_P19"/>
    <property type="match status" value="1"/>
</dbReference>
<dbReference type="SUPFAM" id="SSF103145">
    <property type="entry name" value="Tombusvirus P19 core protein, VP19"/>
    <property type="match status" value="1"/>
</dbReference>
<evidence type="ECO:0000250" key="1"/>
<evidence type="ECO:0000256" key="2">
    <source>
        <dbReference type="SAM" id="MobiDB-lite"/>
    </source>
</evidence>
<evidence type="ECO:0000305" key="3"/>
<name>P19_PENSV</name>
<feature type="chain" id="PRO_0000222877" description="RNA silencing suppressor p19">
    <location>
        <begin position="1"/>
        <end position="172"/>
    </location>
</feature>
<feature type="region of interest" description="Disordered" evidence="2">
    <location>
        <begin position="153"/>
        <end position="172"/>
    </location>
</feature>